<dbReference type="EC" id="4.6.1.18" evidence="2"/>
<dbReference type="EMBL" id="AF479633">
    <property type="protein sequence ID" value="AAM14440.1"/>
    <property type="molecule type" value="Genomic_DNA"/>
</dbReference>
<dbReference type="SMR" id="Q8SPY3"/>
<dbReference type="GlyCosmos" id="Q8SPY3">
    <property type="glycosylation" value="4 sites, No reported glycans"/>
</dbReference>
<dbReference type="GO" id="GO:0005615">
    <property type="term" value="C:extracellular space"/>
    <property type="evidence" value="ECO:0007669"/>
    <property type="project" value="TreeGrafter"/>
</dbReference>
<dbReference type="GO" id="GO:0005764">
    <property type="term" value="C:lysosome"/>
    <property type="evidence" value="ECO:0007669"/>
    <property type="project" value="UniProtKB-SubCell"/>
</dbReference>
<dbReference type="GO" id="GO:0016829">
    <property type="term" value="F:lyase activity"/>
    <property type="evidence" value="ECO:0007669"/>
    <property type="project" value="UniProtKB-KW"/>
</dbReference>
<dbReference type="GO" id="GO:0003676">
    <property type="term" value="F:nucleic acid binding"/>
    <property type="evidence" value="ECO:0007669"/>
    <property type="project" value="InterPro"/>
</dbReference>
<dbReference type="GO" id="GO:0004522">
    <property type="term" value="F:ribonuclease A activity"/>
    <property type="evidence" value="ECO:0007669"/>
    <property type="project" value="UniProtKB-EC"/>
</dbReference>
<dbReference type="GO" id="GO:0006935">
    <property type="term" value="P:chemotaxis"/>
    <property type="evidence" value="ECO:0007669"/>
    <property type="project" value="TreeGrafter"/>
</dbReference>
<dbReference type="GO" id="GO:0051607">
    <property type="term" value="P:defense response to virus"/>
    <property type="evidence" value="ECO:0007669"/>
    <property type="project" value="UniProtKB-ARBA"/>
</dbReference>
<dbReference type="GO" id="GO:0002227">
    <property type="term" value="P:innate immune response in mucosa"/>
    <property type="evidence" value="ECO:0007669"/>
    <property type="project" value="TreeGrafter"/>
</dbReference>
<dbReference type="CDD" id="cd06265">
    <property type="entry name" value="RNase_A_canonical"/>
    <property type="match status" value="1"/>
</dbReference>
<dbReference type="FunFam" id="3.10.130.10:FF:000001">
    <property type="entry name" value="Ribonuclease pancreatic"/>
    <property type="match status" value="1"/>
</dbReference>
<dbReference type="Gene3D" id="3.10.130.10">
    <property type="entry name" value="Ribonuclease A-like domain"/>
    <property type="match status" value="1"/>
</dbReference>
<dbReference type="InterPro" id="IPR001427">
    <property type="entry name" value="RNaseA"/>
</dbReference>
<dbReference type="InterPro" id="IPR036816">
    <property type="entry name" value="RNaseA-like_dom_sf"/>
</dbReference>
<dbReference type="InterPro" id="IPR023411">
    <property type="entry name" value="RNaseA_AS"/>
</dbReference>
<dbReference type="InterPro" id="IPR023412">
    <property type="entry name" value="RNaseA_domain"/>
</dbReference>
<dbReference type="PANTHER" id="PTHR11437:SF62">
    <property type="entry name" value="NON-SECRETORY RIBONUCLEASE"/>
    <property type="match status" value="1"/>
</dbReference>
<dbReference type="PANTHER" id="PTHR11437">
    <property type="entry name" value="RIBONUCLEASE"/>
    <property type="match status" value="1"/>
</dbReference>
<dbReference type="Pfam" id="PF00074">
    <property type="entry name" value="RnaseA"/>
    <property type="match status" value="1"/>
</dbReference>
<dbReference type="PRINTS" id="PR00794">
    <property type="entry name" value="RIBONUCLEASE"/>
</dbReference>
<dbReference type="SMART" id="SM00092">
    <property type="entry name" value="RNAse_Pc"/>
    <property type="match status" value="1"/>
</dbReference>
<dbReference type="SUPFAM" id="SSF54076">
    <property type="entry name" value="RNase A-like"/>
    <property type="match status" value="1"/>
</dbReference>
<dbReference type="PROSITE" id="PS00127">
    <property type="entry name" value="RNASE_PANCREATIC"/>
    <property type="match status" value="1"/>
</dbReference>
<name>RNAS2_SAGLB</name>
<protein>
    <recommendedName>
        <fullName>Non-secretory ribonuclease</fullName>
        <ecNumber evidence="2">4.6.1.18</ecNumber>
    </recommendedName>
    <alternativeName>
        <fullName>Eosinophil-derived neurotoxin</fullName>
    </alternativeName>
    <alternativeName>
        <fullName>RNase UpI-2</fullName>
    </alternativeName>
    <alternativeName>
        <fullName>Ribonuclease 2</fullName>
        <shortName>RNase 2</shortName>
    </alternativeName>
    <alternativeName>
        <fullName>Ribonuclease US</fullName>
    </alternativeName>
</protein>
<keyword id="KW-0255">Endonuclease</keyword>
<keyword id="KW-0325">Glycoprotein</keyword>
<keyword id="KW-0378">Hydrolase</keyword>
<keyword id="KW-0456">Lyase</keyword>
<keyword id="KW-0458">Lysosome</keyword>
<keyword id="KW-0944">Nitration</keyword>
<keyword id="KW-0540">Nuclease</keyword>
<keyword id="KW-0732">Signal</keyword>
<organism>
    <name type="scientific">Saguinus labiatus</name>
    <name type="common">Red-chested mustached tamarin</name>
    <dbReference type="NCBI Taxonomy" id="78454"/>
    <lineage>
        <taxon>Eukaryota</taxon>
        <taxon>Metazoa</taxon>
        <taxon>Chordata</taxon>
        <taxon>Craniata</taxon>
        <taxon>Vertebrata</taxon>
        <taxon>Euteleostomi</taxon>
        <taxon>Mammalia</taxon>
        <taxon>Eutheria</taxon>
        <taxon>Euarchontoglires</taxon>
        <taxon>Primates</taxon>
        <taxon>Haplorrhini</taxon>
        <taxon>Platyrrhini</taxon>
        <taxon>Cebidae</taxon>
        <taxon>Callitrichinae</taxon>
        <taxon>Saguinus</taxon>
    </lineage>
</organism>
<reference key="1">
    <citation type="journal article" date="2002" name="Proc. Natl. Acad. Sci. U.S.A.">
        <title>Complementary advantageous substitutions in the evolution of an antiviral RNase of higher primates.</title>
        <authorList>
            <person name="Zhang J."/>
            <person name="Rosenberg H.F."/>
        </authorList>
    </citation>
    <scope>NUCLEOTIDE SEQUENCE [GENOMIC DNA]</scope>
</reference>
<feature type="signal peptide" evidence="1">
    <location>
        <begin position="1"/>
        <end position="27"/>
    </location>
</feature>
<feature type="chain" id="PRO_0000251796" description="Non-secretory ribonuclease">
    <location>
        <begin position="28"/>
        <end position="158"/>
    </location>
</feature>
<feature type="active site" description="Proton acceptor" evidence="1">
    <location>
        <position position="42"/>
    </location>
</feature>
<feature type="active site" description="Proton donor" evidence="1">
    <location>
        <position position="153"/>
    </location>
</feature>
<feature type="binding site" evidence="1">
    <location>
        <begin position="65"/>
        <end position="69"/>
    </location>
    <ligand>
        <name>substrate</name>
    </ligand>
</feature>
<feature type="modified residue" description="3'-nitrotyrosine" evidence="3">
    <location>
        <position position="60"/>
    </location>
</feature>
<feature type="glycosylation site" description="C-linked (Man) tryptophan" evidence="3">
    <location>
        <position position="34"/>
    </location>
</feature>
<feature type="glycosylation site" description="N-linked (GlcNAc...) asparagine" evidence="4">
    <location>
        <position position="86"/>
    </location>
</feature>
<feature type="glycosylation site" description="N-linked (GlcNAc...) asparagine" evidence="4">
    <location>
        <position position="92"/>
    </location>
</feature>
<feature type="glycosylation site" description="N-linked (GlcNAc...) asparagine" evidence="4">
    <location>
        <position position="111"/>
    </location>
</feature>
<accession>Q8SPY3</accession>
<proteinExistence type="inferred from homology"/>
<evidence type="ECO:0000250" key="1"/>
<evidence type="ECO:0000250" key="2">
    <source>
        <dbReference type="UniProtKB" id="O18937"/>
    </source>
</evidence>
<evidence type="ECO:0000250" key="3">
    <source>
        <dbReference type="UniProtKB" id="P10153"/>
    </source>
</evidence>
<evidence type="ECO:0000255" key="4"/>
<evidence type="ECO:0000305" key="5"/>
<comment type="function">
    <text evidence="1">This is a non-secretory ribonuclease. It is a pyrimidine specific nuclease with a slight preference for U. Cytotoxin and helminthotoxin. Possesses a wide variety of biological activities (By similarity).</text>
</comment>
<comment type="catalytic activity">
    <reaction evidence="2">
        <text>an [RNA] containing cytidine + H2O = an [RNA]-3'-cytidine-3'-phosphate + a 5'-hydroxy-ribonucleotide-3'-[RNA].</text>
        <dbReference type="EC" id="4.6.1.18"/>
    </reaction>
</comment>
<comment type="catalytic activity">
    <reaction evidence="2">
        <text>an [RNA] containing uridine + H2O = an [RNA]-3'-uridine-3'-phosphate + a 5'-hydroxy-ribonucleotide-3'-[RNA].</text>
        <dbReference type="EC" id="4.6.1.18"/>
    </reaction>
</comment>
<comment type="subunit">
    <text evidence="1">Interacts with and forms a tight 1:1 complex with RNH1. Dimerization of two such complexes may occur (By similarity).</text>
</comment>
<comment type="subcellular location">
    <subcellularLocation>
        <location evidence="5">Lysosome</location>
    </subcellularLocation>
    <subcellularLocation>
        <location evidence="1">Cytoplasmic granule</location>
    </subcellularLocation>
    <text evidence="1">Matrix of eosinophil's large specific granule.</text>
</comment>
<comment type="similarity">
    <text evidence="5">Belongs to the pancreatic ribonuclease family.</text>
</comment>
<gene>
    <name type="primary">RNASE2</name>
    <name type="synonym">EDN</name>
    <name type="synonym">RNS2</name>
</gene>
<sequence length="158" mass="17853">MVPKLFTSQICLLLLLGLSSLEVSLHAKPQQFSWAQWFRIQHIQTTPLHCTYAMRAINRYQPRCKNRNTFLHTTFADVVNVCGNTNMTCPGNASLNNCHHSGVRVPLTYCNLTGPQTISNCVYSSTQANMFYVVACDNRDPRDPPQYPVVPVHLDTII</sequence>